<feature type="chain" id="PRO_0000053554" description="Nuclear receptor subfamily 1 group I member 3">
    <location>
        <begin position="1"/>
        <end position="358"/>
    </location>
</feature>
<feature type="domain" description="NR LBD" evidence="4">
    <location>
        <begin position="119"/>
        <end position="358"/>
    </location>
</feature>
<feature type="DNA-binding region" description="Nuclear receptor" evidence="3">
    <location>
        <begin position="18"/>
        <end position="93"/>
    </location>
</feature>
<feature type="zinc finger region" description="NR C4-type" evidence="3">
    <location>
        <begin position="21"/>
        <end position="41"/>
    </location>
</feature>
<feature type="zinc finger region" description="NR C4-type" evidence="3">
    <location>
        <begin position="57"/>
        <end position="81"/>
    </location>
</feature>
<feature type="site" description="Important for TCPOBOP recognition">
    <location>
        <position position="171"/>
    </location>
</feature>
<feature type="site" description="Important for TCPOBOP recognition">
    <location>
        <position position="175"/>
    </location>
</feature>
<feature type="site" description="Important for TCPOBOP recognition">
    <location>
        <position position="216"/>
    </location>
</feature>
<feature type="site" description="Important for TCPOBOP recognition">
    <location>
        <position position="227"/>
    </location>
</feature>
<feature type="site" description="Important for TCPOBOP recognition">
    <location>
        <position position="244"/>
    </location>
</feature>
<feature type="site" description="Important for TCPOBOP recognition">
    <location>
        <position position="336"/>
    </location>
</feature>
<feature type="modified residue" description="Phosphothreonine; by PKC" evidence="2">
    <location>
        <position position="48"/>
    </location>
</feature>
<feature type="splice variant" id="VSP_003671" description="In isoform CAR2." evidence="11">
    <original>DRPGVT</original>
    <variation>GFCMQS</variation>
    <location>
        <begin position="281"/>
        <end position="286"/>
    </location>
</feature>
<feature type="splice variant" id="VSP_003672" description="In isoform CAR2." evidence="11">
    <location>
        <begin position="287"/>
        <end position="358"/>
    </location>
</feature>
<feature type="mutagenesis site" description="Diminished binding of coactivator NCOA2 in the presence of TCPOBOP." evidence="7">
    <original>F</original>
    <variation>W</variation>
    <location>
        <position position="171"/>
    </location>
</feature>
<feature type="mutagenesis site" description="Diminished binding of coactivator NCOA2 in the presence of TCPOBOP." evidence="7">
    <original>N</original>
    <variation>F</variation>
    <location>
        <position position="175"/>
    </location>
</feature>
<feature type="mutagenesis site" description="Diminished binding of coactivator NCOA2 in the presence of TCPOBOP." evidence="7">
    <original>L</original>
    <variation>F</variation>
    <location>
        <position position="216"/>
    </location>
</feature>
<feature type="mutagenesis site" description="Diminished binding of coactivator NCOA2 in the presence of TCPOBOP." evidence="7">
    <original>F</original>
    <variation>W</variation>
    <location>
        <position position="227"/>
    </location>
</feature>
<feature type="mutagenesis site" description="No effect on binding of coactivator NCOA2 in the presence of TCPOBOP." evidence="7">
    <original>Y</original>
    <variation>A</variation>
    <location>
        <position position="234"/>
    </location>
</feature>
<feature type="mutagenesis site" description="Diminished binding of coactivator NCOA2 in the presence of TCPOBOP." evidence="7">
    <original>F</original>
    <variation>A</variation>
    <location>
        <position position="244"/>
    </location>
</feature>
<feature type="mutagenesis site" description="Diminished binding of coactivator NCOA2 in the presence of TCPOBOP." evidence="7">
    <original>Y</original>
    <variation>A</variation>
    <location>
        <position position="336"/>
    </location>
</feature>
<feature type="mutagenesis site" description="Dramatic increase in binding NCOA2. Little effect on binding of coactivator NCOA2 in the presence of TCPOBOP." evidence="7">
    <original>L</original>
    <variation>F</variation>
    <location>
        <position position="346"/>
    </location>
</feature>
<feature type="sequence conflict" description="In Ref. 1; AAC53349/AAC53350." evidence="12" ref="1">
    <original>M</original>
    <variation>L</variation>
    <location>
        <position position="138"/>
    </location>
</feature>
<feature type="helix" evidence="14">
    <location>
        <begin position="118"/>
        <end position="134"/>
    </location>
</feature>
<feature type="turn" evidence="14">
    <location>
        <begin position="135"/>
        <end position="137"/>
    </location>
</feature>
<feature type="helix" evidence="14">
    <location>
        <begin position="138"/>
        <end position="144"/>
    </location>
</feature>
<feature type="helix" evidence="14">
    <location>
        <begin position="149"/>
        <end position="152"/>
    </location>
</feature>
<feature type="strand" evidence="13">
    <location>
        <begin position="160"/>
        <end position="162"/>
    </location>
</feature>
<feature type="helix" evidence="14">
    <location>
        <begin position="164"/>
        <end position="187"/>
    </location>
</feature>
<feature type="helix" evidence="14">
    <location>
        <begin position="190"/>
        <end position="193"/>
    </location>
</feature>
<feature type="helix" evidence="14">
    <location>
        <begin position="197"/>
        <end position="216"/>
    </location>
</feature>
<feature type="helix" evidence="14">
    <location>
        <begin position="217"/>
        <end position="219"/>
    </location>
</feature>
<feature type="turn" evidence="14">
    <location>
        <begin position="222"/>
        <end position="225"/>
    </location>
</feature>
<feature type="strand" evidence="14">
    <location>
        <begin position="226"/>
        <end position="229"/>
    </location>
</feature>
<feature type="strand" evidence="14">
    <location>
        <begin position="232"/>
        <end position="234"/>
    </location>
</feature>
<feature type="helix" evidence="14">
    <location>
        <begin position="236"/>
        <end position="241"/>
    </location>
</feature>
<feature type="helix" evidence="14">
    <location>
        <begin position="246"/>
        <end position="260"/>
    </location>
</feature>
<feature type="helix" evidence="14">
    <location>
        <begin position="266"/>
        <end position="277"/>
    </location>
</feature>
<feature type="helix" evidence="14">
    <location>
        <begin position="288"/>
        <end position="308"/>
    </location>
</feature>
<feature type="turn" evidence="14">
    <location>
        <begin position="309"/>
        <end position="312"/>
    </location>
</feature>
<feature type="helix" evidence="14">
    <location>
        <begin position="318"/>
        <end position="335"/>
    </location>
</feature>
<feature type="helix" evidence="14">
    <location>
        <begin position="337"/>
        <end position="343"/>
    </location>
</feature>
<feature type="helix" evidence="13">
    <location>
        <begin position="345"/>
        <end position="349"/>
    </location>
</feature>
<feature type="helix" evidence="13">
    <location>
        <begin position="351"/>
        <end position="357"/>
    </location>
</feature>
<evidence type="ECO:0000250" key="1"/>
<evidence type="ECO:0000250" key="2">
    <source>
        <dbReference type="UniProtKB" id="Q14994"/>
    </source>
</evidence>
<evidence type="ECO:0000255" key="3">
    <source>
        <dbReference type="PROSITE-ProRule" id="PRU00407"/>
    </source>
</evidence>
<evidence type="ECO:0000255" key="4">
    <source>
        <dbReference type="PROSITE-ProRule" id="PRU01189"/>
    </source>
</evidence>
<evidence type="ECO:0000269" key="5">
    <source>
    </source>
</evidence>
<evidence type="ECO:0000269" key="6">
    <source>
    </source>
</evidence>
<evidence type="ECO:0000269" key="7">
    <source>
    </source>
</evidence>
<evidence type="ECO:0000269" key="8">
    <source>
    </source>
</evidence>
<evidence type="ECO:0000269" key="9">
    <source>
    </source>
</evidence>
<evidence type="ECO:0000269" key="10">
    <source>
    </source>
</evidence>
<evidence type="ECO:0000303" key="11">
    <source>
    </source>
</evidence>
<evidence type="ECO:0000305" key="12"/>
<evidence type="ECO:0007829" key="13">
    <source>
        <dbReference type="PDB" id="1XLS"/>
    </source>
</evidence>
<evidence type="ECO:0007829" key="14">
    <source>
        <dbReference type="PDB" id="1XNX"/>
    </source>
</evidence>
<gene>
    <name type="primary">Nr1i3</name>
    <name type="synonym">Car</name>
</gene>
<proteinExistence type="evidence at protein level"/>
<comment type="function">
    <text evidence="1 5">Binds and transactivates the retinoic acid response elements that control expression of the retinoic acid receptor beta 2 and alcohol dehydrogenase 3 genes. Transactivates both the phenobarbital responsive element module of the human CYP2B6 gene and the CYP3A4 xenobiotic response element (By similarity).</text>
</comment>
<comment type="subunit">
    <text evidence="6 7 8 9 10">Heterodimer of NR1I3 and RXR. Interacts with PSMC4. Interacts with ECT2. Directly interacts with DNAJC7; this complex may also include HSP90. Interacts with CRY1 (PubMed:28751364). Interacts with CRY2 in a ligand-dependent manner (PubMed:28751364).</text>
</comment>
<comment type="subcellular location">
    <subcellularLocation>
        <location>Nucleus</location>
    </subcellularLocation>
    <subcellularLocation>
        <location>Cytoplasm</location>
    </subcellularLocation>
    <subcellularLocation>
        <location evidence="1">Cytoplasm</location>
        <location evidence="1">Cytoskeleton</location>
    </subcellularLocation>
    <text>Recruited to the cytoplasm by DNAJC7.</text>
</comment>
<comment type="alternative products">
    <event type="alternative splicing"/>
    <isoform>
        <id>O35627-1</id>
        <name>CAR1</name>
        <sequence type="displayed"/>
    </isoform>
    <isoform>
        <id>O35627-2</id>
        <name>CAR2</name>
        <sequence type="described" ref="VSP_003671 VSP_003672"/>
    </isoform>
</comment>
<comment type="tissue specificity">
    <text>Predominantly expressed in liver.</text>
</comment>
<comment type="domain">
    <text>Composed by a short N-terminal domain followed by the DNA binding, hinge, and ligand binding/dimerization domains.</text>
</comment>
<comment type="PTM">
    <text evidence="1">Phosphorylated at Thr-48 by PKC, dephosphorylation of Thr-48 is required for nuclear translocation and activation.</text>
</comment>
<comment type="miscellaneous">
    <molecule>Isoform CAR2</molecule>
    <text evidence="12">Does not seem to act as a transactivator. Lacks the C-terminal portion of the ligand binding/dimerization domain.</text>
</comment>
<comment type="similarity">
    <text evidence="12">Belongs to the nuclear hormone receptor family. NR1 subfamily.</text>
</comment>
<keyword id="KW-0002">3D-structure</keyword>
<keyword id="KW-0010">Activator</keyword>
<keyword id="KW-0025">Alternative splicing</keyword>
<keyword id="KW-0963">Cytoplasm</keyword>
<keyword id="KW-0206">Cytoskeleton</keyword>
<keyword id="KW-0238">DNA-binding</keyword>
<keyword id="KW-0479">Metal-binding</keyword>
<keyword id="KW-0539">Nucleus</keyword>
<keyword id="KW-0597">Phosphoprotein</keyword>
<keyword id="KW-0675">Receptor</keyword>
<keyword id="KW-1185">Reference proteome</keyword>
<keyword id="KW-0804">Transcription</keyword>
<keyword id="KW-0805">Transcription regulation</keyword>
<keyword id="KW-0862">Zinc</keyword>
<keyword id="KW-0863">Zinc-finger</keyword>
<accession>O35627</accession>
<accession>O35628</accession>
<accession>Q3V008</accession>
<sequence>MTAMLTLETMASEEEYGPRNCVVCGDRATGYHFHALTCEGCKGFFRRTVSKTIGPICPFAGRCEVSKAQRRHCPACRLQKCLNVGMRKDMILSAEALALRRARQAQRRAEKASLQLNQQQKELVQILLGAHTRHVGPMFDQFVQFKPPAYLFMHHRPFQPRGPVLPLLTHFADINTFMVQQIIKFTKDLPLFRSLTMEDQISLLKGAAVEILHISLNTTFCLQTENFFCGPLCYKMEDAVHAGFQYEFLESILHFHKNLKGLHLQEPEYVLMAATALFSPDRPGVTQREEIDQLQEEMALILNNHIMEQQSRLQSRFLYAKLMGLLADLRSINNAYSYELQRLEELSAMTPLLGEICS</sequence>
<name>NR1I3_MOUSE</name>
<reference key="1">
    <citation type="journal article" date="1997" name="J. Biol. Chem.">
        <title>Differential transactivation by two isoforms of the orphan nuclear hormone receptor CAR.</title>
        <authorList>
            <person name="Choi H.-S."/>
            <person name="Chung M."/>
            <person name="Tzameli I."/>
            <person name="Simha D."/>
            <person name="Lee Y.-K."/>
            <person name="Seol W."/>
            <person name="Moore D.D."/>
        </authorList>
    </citation>
    <scope>NUCLEOTIDE SEQUENCE [MRNA] (ISOFORMS CAR1 AND CAR2)</scope>
    <source>
        <tissue>Liver</tissue>
    </source>
</reference>
<reference key="2">
    <citation type="journal article" date="2005" name="Science">
        <title>The transcriptional landscape of the mammalian genome.</title>
        <authorList>
            <person name="Carninci P."/>
            <person name="Kasukawa T."/>
            <person name="Katayama S."/>
            <person name="Gough J."/>
            <person name="Frith M.C."/>
            <person name="Maeda N."/>
            <person name="Oyama R."/>
            <person name="Ravasi T."/>
            <person name="Lenhard B."/>
            <person name="Wells C."/>
            <person name="Kodzius R."/>
            <person name="Shimokawa K."/>
            <person name="Bajic V.B."/>
            <person name="Brenner S.E."/>
            <person name="Batalov S."/>
            <person name="Forrest A.R."/>
            <person name="Zavolan M."/>
            <person name="Davis M.J."/>
            <person name="Wilming L.G."/>
            <person name="Aidinis V."/>
            <person name="Allen J.E."/>
            <person name="Ambesi-Impiombato A."/>
            <person name="Apweiler R."/>
            <person name="Aturaliya R.N."/>
            <person name="Bailey T.L."/>
            <person name="Bansal M."/>
            <person name="Baxter L."/>
            <person name="Beisel K.W."/>
            <person name="Bersano T."/>
            <person name="Bono H."/>
            <person name="Chalk A.M."/>
            <person name="Chiu K.P."/>
            <person name="Choudhary V."/>
            <person name="Christoffels A."/>
            <person name="Clutterbuck D.R."/>
            <person name="Crowe M.L."/>
            <person name="Dalla E."/>
            <person name="Dalrymple B.P."/>
            <person name="de Bono B."/>
            <person name="Della Gatta G."/>
            <person name="di Bernardo D."/>
            <person name="Down T."/>
            <person name="Engstrom P."/>
            <person name="Fagiolini M."/>
            <person name="Faulkner G."/>
            <person name="Fletcher C.F."/>
            <person name="Fukushima T."/>
            <person name="Furuno M."/>
            <person name="Futaki S."/>
            <person name="Gariboldi M."/>
            <person name="Georgii-Hemming P."/>
            <person name="Gingeras T.R."/>
            <person name="Gojobori T."/>
            <person name="Green R.E."/>
            <person name="Gustincich S."/>
            <person name="Harbers M."/>
            <person name="Hayashi Y."/>
            <person name="Hensch T.K."/>
            <person name="Hirokawa N."/>
            <person name="Hill D."/>
            <person name="Huminiecki L."/>
            <person name="Iacono M."/>
            <person name="Ikeo K."/>
            <person name="Iwama A."/>
            <person name="Ishikawa T."/>
            <person name="Jakt M."/>
            <person name="Kanapin A."/>
            <person name="Katoh M."/>
            <person name="Kawasawa Y."/>
            <person name="Kelso J."/>
            <person name="Kitamura H."/>
            <person name="Kitano H."/>
            <person name="Kollias G."/>
            <person name="Krishnan S.P."/>
            <person name="Kruger A."/>
            <person name="Kummerfeld S.K."/>
            <person name="Kurochkin I.V."/>
            <person name="Lareau L.F."/>
            <person name="Lazarevic D."/>
            <person name="Lipovich L."/>
            <person name="Liu J."/>
            <person name="Liuni S."/>
            <person name="McWilliam S."/>
            <person name="Madan Babu M."/>
            <person name="Madera M."/>
            <person name="Marchionni L."/>
            <person name="Matsuda H."/>
            <person name="Matsuzawa S."/>
            <person name="Miki H."/>
            <person name="Mignone F."/>
            <person name="Miyake S."/>
            <person name="Morris K."/>
            <person name="Mottagui-Tabar S."/>
            <person name="Mulder N."/>
            <person name="Nakano N."/>
            <person name="Nakauchi H."/>
            <person name="Ng P."/>
            <person name="Nilsson R."/>
            <person name="Nishiguchi S."/>
            <person name="Nishikawa S."/>
            <person name="Nori F."/>
            <person name="Ohara O."/>
            <person name="Okazaki Y."/>
            <person name="Orlando V."/>
            <person name="Pang K.C."/>
            <person name="Pavan W.J."/>
            <person name="Pavesi G."/>
            <person name="Pesole G."/>
            <person name="Petrovsky N."/>
            <person name="Piazza S."/>
            <person name="Reed J."/>
            <person name="Reid J.F."/>
            <person name="Ring B.Z."/>
            <person name="Ringwald M."/>
            <person name="Rost B."/>
            <person name="Ruan Y."/>
            <person name="Salzberg S.L."/>
            <person name="Sandelin A."/>
            <person name="Schneider C."/>
            <person name="Schoenbach C."/>
            <person name="Sekiguchi K."/>
            <person name="Semple C.A."/>
            <person name="Seno S."/>
            <person name="Sessa L."/>
            <person name="Sheng Y."/>
            <person name="Shibata Y."/>
            <person name="Shimada H."/>
            <person name="Shimada K."/>
            <person name="Silva D."/>
            <person name="Sinclair B."/>
            <person name="Sperling S."/>
            <person name="Stupka E."/>
            <person name="Sugiura K."/>
            <person name="Sultana R."/>
            <person name="Takenaka Y."/>
            <person name="Taki K."/>
            <person name="Tammoja K."/>
            <person name="Tan S.L."/>
            <person name="Tang S."/>
            <person name="Taylor M.S."/>
            <person name="Tegner J."/>
            <person name="Teichmann S.A."/>
            <person name="Ueda H.R."/>
            <person name="van Nimwegen E."/>
            <person name="Verardo R."/>
            <person name="Wei C.L."/>
            <person name="Yagi K."/>
            <person name="Yamanishi H."/>
            <person name="Zabarovsky E."/>
            <person name="Zhu S."/>
            <person name="Zimmer A."/>
            <person name="Hide W."/>
            <person name="Bult C."/>
            <person name="Grimmond S.M."/>
            <person name="Teasdale R.D."/>
            <person name="Liu E.T."/>
            <person name="Brusic V."/>
            <person name="Quackenbush J."/>
            <person name="Wahlestedt C."/>
            <person name="Mattick J.S."/>
            <person name="Hume D.A."/>
            <person name="Kai C."/>
            <person name="Sasaki D."/>
            <person name="Tomaru Y."/>
            <person name="Fukuda S."/>
            <person name="Kanamori-Katayama M."/>
            <person name="Suzuki M."/>
            <person name="Aoki J."/>
            <person name="Arakawa T."/>
            <person name="Iida J."/>
            <person name="Imamura K."/>
            <person name="Itoh M."/>
            <person name="Kato T."/>
            <person name="Kawaji H."/>
            <person name="Kawagashira N."/>
            <person name="Kawashima T."/>
            <person name="Kojima M."/>
            <person name="Kondo S."/>
            <person name="Konno H."/>
            <person name="Nakano K."/>
            <person name="Ninomiya N."/>
            <person name="Nishio T."/>
            <person name="Okada M."/>
            <person name="Plessy C."/>
            <person name="Shibata K."/>
            <person name="Shiraki T."/>
            <person name="Suzuki S."/>
            <person name="Tagami M."/>
            <person name="Waki K."/>
            <person name="Watahiki A."/>
            <person name="Okamura-Oho Y."/>
            <person name="Suzuki H."/>
            <person name="Kawai J."/>
            <person name="Hayashizaki Y."/>
        </authorList>
    </citation>
    <scope>NUCLEOTIDE SEQUENCE [LARGE SCALE MRNA] (ISOFORM CAR1)</scope>
    <source>
        <strain>C57BL/6J</strain>
        <tissue>Ovary</tissue>
        <tissue>Uterus</tissue>
    </source>
</reference>
<reference key="3">
    <citation type="submission" date="2005-09" db="EMBL/GenBank/DDBJ databases">
        <authorList>
            <person name="Mural R.J."/>
            <person name="Adams M.D."/>
            <person name="Myers E.W."/>
            <person name="Smith H.O."/>
            <person name="Venter J.C."/>
        </authorList>
    </citation>
    <scope>NUCLEOTIDE SEQUENCE [LARGE SCALE GENOMIC DNA]</scope>
</reference>
<reference key="4">
    <citation type="journal article" date="1999" name="Arch. Biochem. Biophys.">
        <title>P450 gene induction by structurally diverse xenochemicals: central role of nuclear receptors CAR, PXR, and PPAR.</title>
        <authorList>
            <person name="Waxman D.J."/>
        </authorList>
    </citation>
    <scope>FUNCTION</scope>
</reference>
<reference key="5">
    <citation type="journal article" date="1996" name="J. Steroid Biochem. Mol. Biol.">
        <title>A component of the 26S proteasome binds on orphan member of the nuclear hormone receptor superfamily.</title>
        <authorList>
            <person name="Choi H.S."/>
            <person name="Seol W."/>
            <person name="Moore D.D."/>
        </authorList>
    </citation>
    <scope>INTERACTION WITH PSMC4</scope>
</reference>
<reference key="6">
    <citation type="journal article" date="2003" name="Mol. Pharmacol.">
        <title>Cytoplasmic accumulation of the nuclear receptor CAR by a tetratricopeptide repeat protein in HepG2 cells.</title>
        <authorList>
            <person name="Kobayashi K."/>
            <person name="Sueyoshi T."/>
            <person name="Inoue K."/>
            <person name="Moore R."/>
            <person name="Negishi M."/>
        </authorList>
    </citation>
    <scope>INTERACTION WITH DNAJC7 AND HSP90</scope>
    <scope>SUBCELLULAR LOCATION</scope>
</reference>
<reference key="7">
    <citation type="journal article" date="2007" name="FEBS Lett.">
        <title>Overexpression of the Rho-guanine nucleotide exchange factor ECT2 inhibits nuclear translocation of nuclear receptor CAR in the mouse liver.</title>
        <authorList>
            <person name="Hosseinpour F."/>
            <person name="Timsit Y."/>
            <person name="Koike C."/>
            <person name="Matsui K."/>
            <person name="Yamamoto Y."/>
            <person name="Moore R."/>
            <person name="Negishi M."/>
        </authorList>
    </citation>
    <scope>INTERACTION WITH ECT2</scope>
    <scope>SUBCELLULAR LOCATION</scope>
</reference>
<reference key="8">
    <citation type="journal article" date="2017" name="Proc. Natl. Acad. Sci. U.S.A.">
        <title>Circadian repressors CRY1 and CRY2 broadly interact with nuclear receptors and modulate transcriptional activity.</title>
        <authorList>
            <person name="Kriebs A."/>
            <person name="Jordan S.D."/>
            <person name="Soto E."/>
            <person name="Henriksson E."/>
            <person name="Sandate C.R."/>
            <person name="Vaughan M.E."/>
            <person name="Chan A.B."/>
            <person name="Duglan D."/>
            <person name="Papp S.J."/>
            <person name="Huber A.L."/>
            <person name="Afetian M.E."/>
            <person name="Yu R.T."/>
            <person name="Zhao X."/>
            <person name="Downes M."/>
            <person name="Evans R.M."/>
            <person name="Lamia K.A."/>
        </authorList>
    </citation>
    <scope>INTERACTION WITH CRY1 AND CRY2</scope>
</reference>
<reference key="9">
    <citation type="journal article" date="2004" name="Mol. Cell">
        <title>The nuclear xenobiotic receptor CAR: structural determinants of constitutive activation and heterodimerization.</title>
        <authorList>
            <person name="Suino K."/>
            <person name="Peng L."/>
            <person name="Reynolds R."/>
            <person name="Li Y."/>
            <person name="Cha J.Y."/>
            <person name="Repa J.J."/>
            <person name="Kliewer S.A."/>
            <person name="Xu H.E."/>
        </authorList>
    </citation>
    <scope>X-RAY CRYSTALLOGRAPHY (2.96 ANGSTROMS) OF 227-458 IN COMPLEX WITH H.SAPIENS RXRA; R.NORVEGICUS NCOA2 AND AGONIST INSECTICIDE CONTAMINANT TCPOBOP</scope>
    <scope>MUTAGENESIS OF PHE-171; ASN-175; LEU-216; PHE-227; TYR-234; PHE-244; TYR-336 AND LEU-346</scope>
</reference>
<protein>
    <recommendedName>
        <fullName>Nuclear receptor subfamily 1 group I member 3</fullName>
    </recommendedName>
    <alternativeName>
        <fullName>Constitutive androstane receptor</fullName>
        <shortName>CAR</shortName>
    </alternativeName>
    <alternativeName>
        <fullName>Orphan nuclear receptor MB67</fullName>
    </alternativeName>
</protein>
<dbReference type="EMBL" id="AF009327">
    <property type="protein sequence ID" value="AAC53349.1"/>
    <property type="molecule type" value="mRNA"/>
</dbReference>
<dbReference type="EMBL" id="AF009328">
    <property type="protein sequence ID" value="AAC53350.1"/>
    <property type="molecule type" value="mRNA"/>
</dbReference>
<dbReference type="EMBL" id="AK133515">
    <property type="protein sequence ID" value="BAE21697.1"/>
    <property type="molecule type" value="mRNA"/>
</dbReference>
<dbReference type="EMBL" id="CH466520">
    <property type="protein sequence ID" value="EDL39126.1"/>
    <property type="molecule type" value="Genomic_DNA"/>
</dbReference>
<dbReference type="CCDS" id="CCDS15480.1">
    <molecule id="O35627-1"/>
</dbReference>
<dbReference type="CCDS" id="CCDS56654.1">
    <molecule id="O35627-2"/>
</dbReference>
<dbReference type="RefSeq" id="NP_001229991.1">
    <molecule id="O35627-2"/>
    <property type="nucleotide sequence ID" value="NM_001243062.1"/>
</dbReference>
<dbReference type="RefSeq" id="NP_001229992.1">
    <property type="nucleotide sequence ID" value="NM_001243063.1"/>
</dbReference>
<dbReference type="RefSeq" id="NP_033933.2">
    <molecule id="O35627-1"/>
    <property type="nucleotide sequence ID" value="NM_009803.5"/>
</dbReference>
<dbReference type="PDB" id="1XLS">
    <property type="method" value="X-ray"/>
    <property type="resolution" value="2.96 A"/>
    <property type="chains" value="E/F/G/H=117-358"/>
</dbReference>
<dbReference type="PDB" id="1XNX">
    <property type="method" value="X-ray"/>
    <property type="resolution" value="2.90 A"/>
    <property type="chains" value="A/B=109-358"/>
</dbReference>
<dbReference type="PDBsum" id="1XLS"/>
<dbReference type="PDBsum" id="1XNX"/>
<dbReference type="SMR" id="O35627"/>
<dbReference type="BioGRID" id="198489">
    <property type="interactions" value="13"/>
</dbReference>
<dbReference type="CORUM" id="O35627"/>
<dbReference type="FunCoup" id="O35627">
    <property type="interactions" value="741"/>
</dbReference>
<dbReference type="IntAct" id="O35627">
    <property type="interactions" value="1"/>
</dbReference>
<dbReference type="STRING" id="10090.ENSMUSP00000005820"/>
<dbReference type="BindingDB" id="O35627"/>
<dbReference type="ChEMBL" id="CHEMBL3069"/>
<dbReference type="DrugCentral" id="O35627"/>
<dbReference type="GuidetoPHARMACOLOGY" id="607"/>
<dbReference type="iPTMnet" id="O35627"/>
<dbReference type="PhosphoSitePlus" id="O35627"/>
<dbReference type="PaxDb" id="10090-ENSMUSP00000005820"/>
<dbReference type="ProteomicsDB" id="295523">
    <molecule id="O35627-1"/>
</dbReference>
<dbReference type="ProteomicsDB" id="295524">
    <molecule id="O35627-2"/>
</dbReference>
<dbReference type="Antibodypedia" id="20508">
    <property type="antibodies" value="472 antibodies from 32 providers"/>
</dbReference>
<dbReference type="DNASU" id="12355"/>
<dbReference type="Ensembl" id="ENSMUST00000005820.11">
    <molecule id="O35627-1"/>
    <property type="protein sequence ID" value="ENSMUSP00000005820.5"/>
    <property type="gene ID" value="ENSMUSG00000005677.15"/>
</dbReference>
<dbReference type="Ensembl" id="ENSMUST00000075469.12">
    <molecule id="O35627-2"/>
    <property type="protein sequence ID" value="ENSMUSP00000074915.6"/>
    <property type="gene ID" value="ENSMUSG00000005677.15"/>
</dbReference>
<dbReference type="GeneID" id="12355"/>
<dbReference type="KEGG" id="mmu:12355"/>
<dbReference type="UCSC" id="uc007dnf.2">
    <molecule id="O35627-1"/>
    <property type="organism name" value="mouse"/>
</dbReference>
<dbReference type="UCSC" id="uc007dng.2">
    <molecule id="O35627-2"/>
    <property type="organism name" value="mouse"/>
</dbReference>
<dbReference type="AGR" id="MGI:1346307"/>
<dbReference type="CTD" id="9970"/>
<dbReference type="MGI" id="MGI:1346307">
    <property type="gene designation" value="Nr1i3"/>
</dbReference>
<dbReference type="VEuPathDB" id="HostDB:ENSMUSG00000005677"/>
<dbReference type="eggNOG" id="KOG3575">
    <property type="taxonomic scope" value="Eukaryota"/>
</dbReference>
<dbReference type="GeneTree" id="ENSGT00940000160641"/>
<dbReference type="HOGENOM" id="CLU_007368_12_0_1"/>
<dbReference type="InParanoid" id="O35627"/>
<dbReference type="OMA" id="VHAGFQE"/>
<dbReference type="OrthoDB" id="6355676at2759"/>
<dbReference type="PhylomeDB" id="O35627"/>
<dbReference type="TreeFam" id="TF316304"/>
<dbReference type="Reactome" id="R-MMU-383280">
    <property type="pathway name" value="Nuclear Receptor transcription pathway"/>
</dbReference>
<dbReference type="BioGRID-ORCS" id="12355">
    <property type="hits" value="3 hits in 81 CRISPR screens"/>
</dbReference>
<dbReference type="ChiTaRS" id="Nr1i3">
    <property type="organism name" value="mouse"/>
</dbReference>
<dbReference type="EvolutionaryTrace" id="O35627"/>
<dbReference type="PRO" id="PR:O35627"/>
<dbReference type="Proteomes" id="UP000000589">
    <property type="component" value="Chromosome 1"/>
</dbReference>
<dbReference type="RNAct" id="O35627">
    <property type="molecule type" value="protein"/>
</dbReference>
<dbReference type="Bgee" id="ENSMUSG00000005677">
    <property type="expression patterns" value="Expressed in left lobe of liver and 61 other cell types or tissues"/>
</dbReference>
<dbReference type="ExpressionAtlas" id="O35627">
    <property type="expression patterns" value="baseline and differential"/>
</dbReference>
<dbReference type="GO" id="GO:0005737">
    <property type="term" value="C:cytoplasm"/>
    <property type="evidence" value="ECO:0000314"/>
    <property type="project" value="UniProtKB"/>
</dbReference>
<dbReference type="GO" id="GO:0005856">
    <property type="term" value="C:cytoskeleton"/>
    <property type="evidence" value="ECO:0007669"/>
    <property type="project" value="UniProtKB-SubCell"/>
</dbReference>
<dbReference type="GO" id="GO:0005829">
    <property type="term" value="C:cytosol"/>
    <property type="evidence" value="ECO:0000314"/>
    <property type="project" value="MGI"/>
</dbReference>
<dbReference type="GO" id="GO:0005654">
    <property type="term" value="C:nucleoplasm"/>
    <property type="evidence" value="ECO:0007669"/>
    <property type="project" value="Ensembl"/>
</dbReference>
<dbReference type="GO" id="GO:0005634">
    <property type="term" value="C:nucleus"/>
    <property type="evidence" value="ECO:0000314"/>
    <property type="project" value="UniProtKB"/>
</dbReference>
<dbReference type="GO" id="GO:0003677">
    <property type="term" value="F:DNA binding"/>
    <property type="evidence" value="ECO:0000314"/>
    <property type="project" value="MGI"/>
</dbReference>
<dbReference type="GO" id="GO:0001228">
    <property type="term" value="F:DNA-binding transcription activator activity, RNA polymerase II-specific"/>
    <property type="evidence" value="ECO:0007669"/>
    <property type="project" value="Ensembl"/>
</dbReference>
<dbReference type="GO" id="GO:0004879">
    <property type="term" value="F:nuclear receptor activity"/>
    <property type="evidence" value="ECO:0007669"/>
    <property type="project" value="Ensembl"/>
</dbReference>
<dbReference type="GO" id="GO:0000977">
    <property type="term" value="F:RNA polymerase II transcription regulatory region sequence-specific DNA binding"/>
    <property type="evidence" value="ECO:0007669"/>
    <property type="project" value="Ensembl"/>
</dbReference>
<dbReference type="GO" id="GO:0008270">
    <property type="term" value="F:zinc ion binding"/>
    <property type="evidence" value="ECO:0007669"/>
    <property type="project" value="UniProtKB-KW"/>
</dbReference>
<dbReference type="GO" id="GO:0045892">
    <property type="term" value="P:negative regulation of DNA-templated transcription"/>
    <property type="evidence" value="ECO:0000314"/>
    <property type="project" value="MGI"/>
</dbReference>
<dbReference type="GO" id="GO:0001649">
    <property type="term" value="P:osteoblast differentiation"/>
    <property type="evidence" value="ECO:0007669"/>
    <property type="project" value="Ensembl"/>
</dbReference>
<dbReference type="GO" id="GO:0006355">
    <property type="term" value="P:regulation of DNA-templated transcription"/>
    <property type="evidence" value="ECO:0000314"/>
    <property type="project" value="MGI"/>
</dbReference>
<dbReference type="CDD" id="cd07156">
    <property type="entry name" value="NR_DBD_VDR_like"/>
    <property type="match status" value="1"/>
</dbReference>
<dbReference type="FunFam" id="1.10.565.10:FF:000025">
    <property type="entry name" value="Nuclear receptor subfamily 1 group I member 3"/>
    <property type="match status" value="1"/>
</dbReference>
<dbReference type="FunFam" id="3.30.50.10:FF:000035">
    <property type="entry name" value="Nuclear receptor subfamily 1 group I member 3"/>
    <property type="match status" value="1"/>
</dbReference>
<dbReference type="Gene3D" id="3.30.50.10">
    <property type="entry name" value="Erythroid Transcription Factor GATA-1, subunit A"/>
    <property type="match status" value="1"/>
</dbReference>
<dbReference type="Gene3D" id="1.10.565.10">
    <property type="entry name" value="Retinoid X Receptor"/>
    <property type="match status" value="1"/>
</dbReference>
<dbReference type="IDEAL" id="IID50248"/>
<dbReference type="InterPro" id="IPR035500">
    <property type="entry name" value="NHR-like_dom_sf"/>
</dbReference>
<dbReference type="InterPro" id="IPR000536">
    <property type="entry name" value="Nucl_hrmn_rcpt_lig-bd"/>
</dbReference>
<dbReference type="InterPro" id="IPR050234">
    <property type="entry name" value="Nuclear_hormone_rcpt_NR1"/>
</dbReference>
<dbReference type="InterPro" id="IPR001723">
    <property type="entry name" value="Nuclear_hrmn_rcpt"/>
</dbReference>
<dbReference type="InterPro" id="IPR001728">
    <property type="entry name" value="ThyrH_rcpt"/>
</dbReference>
<dbReference type="InterPro" id="IPR001628">
    <property type="entry name" value="Znf_hrmn_rcpt"/>
</dbReference>
<dbReference type="InterPro" id="IPR013088">
    <property type="entry name" value="Znf_NHR/GATA"/>
</dbReference>
<dbReference type="PANTHER" id="PTHR24082">
    <property type="entry name" value="NUCLEAR HORMONE RECEPTOR"/>
    <property type="match status" value="1"/>
</dbReference>
<dbReference type="PANTHER" id="PTHR24082:SF231">
    <property type="entry name" value="NUCLEAR RECEPTOR SUBFAMILY 1 GROUP I MEMBER 3"/>
    <property type="match status" value="1"/>
</dbReference>
<dbReference type="Pfam" id="PF00104">
    <property type="entry name" value="Hormone_recep"/>
    <property type="match status" value="1"/>
</dbReference>
<dbReference type="Pfam" id="PF00105">
    <property type="entry name" value="zf-C4"/>
    <property type="match status" value="1"/>
</dbReference>
<dbReference type="PRINTS" id="PR00398">
    <property type="entry name" value="STRDHORMONER"/>
</dbReference>
<dbReference type="PRINTS" id="PR00047">
    <property type="entry name" value="STROIDFINGER"/>
</dbReference>
<dbReference type="PRINTS" id="PR00546">
    <property type="entry name" value="THYROIDHORMR"/>
</dbReference>
<dbReference type="SMART" id="SM00430">
    <property type="entry name" value="HOLI"/>
    <property type="match status" value="1"/>
</dbReference>
<dbReference type="SMART" id="SM00399">
    <property type="entry name" value="ZnF_C4"/>
    <property type="match status" value="1"/>
</dbReference>
<dbReference type="SUPFAM" id="SSF57716">
    <property type="entry name" value="Glucocorticoid receptor-like (DNA-binding domain)"/>
    <property type="match status" value="1"/>
</dbReference>
<dbReference type="SUPFAM" id="SSF48508">
    <property type="entry name" value="Nuclear receptor ligand-binding domain"/>
    <property type="match status" value="1"/>
</dbReference>
<dbReference type="PROSITE" id="PS51843">
    <property type="entry name" value="NR_LBD"/>
    <property type="match status" value="1"/>
</dbReference>
<dbReference type="PROSITE" id="PS00031">
    <property type="entry name" value="NUCLEAR_REC_DBD_1"/>
    <property type="match status" value="1"/>
</dbReference>
<dbReference type="PROSITE" id="PS51030">
    <property type="entry name" value="NUCLEAR_REC_DBD_2"/>
    <property type="match status" value="1"/>
</dbReference>
<organism>
    <name type="scientific">Mus musculus</name>
    <name type="common">Mouse</name>
    <dbReference type="NCBI Taxonomy" id="10090"/>
    <lineage>
        <taxon>Eukaryota</taxon>
        <taxon>Metazoa</taxon>
        <taxon>Chordata</taxon>
        <taxon>Craniata</taxon>
        <taxon>Vertebrata</taxon>
        <taxon>Euteleostomi</taxon>
        <taxon>Mammalia</taxon>
        <taxon>Eutheria</taxon>
        <taxon>Euarchontoglires</taxon>
        <taxon>Glires</taxon>
        <taxon>Rodentia</taxon>
        <taxon>Myomorpha</taxon>
        <taxon>Muroidea</taxon>
        <taxon>Muridae</taxon>
        <taxon>Murinae</taxon>
        <taxon>Mus</taxon>
        <taxon>Mus</taxon>
    </lineage>
</organism>